<proteinExistence type="inferred from homology"/>
<comment type="function">
    <text evidence="1">Core subunit of the mitochondrial membrane respiratory chain NADH dehydrogenase (Complex I) which catalyzes electron transfer from NADH through the respiratory chain, using ubiquinone as an electron acceptor. Essential for the catalytic activity of complex I.</text>
</comment>
<comment type="catalytic activity">
    <reaction evidence="1">
        <text>a ubiquinone + NADH + 5 H(+)(in) = a ubiquinol + NAD(+) + 4 H(+)(out)</text>
        <dbReference type="Rhea" id="RHEA:29091"/>
        <dbReference type="Rhea" id="RHEA-COMP:9565"/>
        <dbReference type="Rhea" id="RHEA-COMP:9566"/>
        <dbReference type="ChEBI" id="CHEBI:15378"/>
        <dbReference type="ChEBI" id="CHEBI:16389"/>
        <dbReference type="ChEBI" id="CHEBI:17976"/>
        <dbReference type="ChEBI" id="CHEBI:57540"/>
        <dbReference type="ChEBI" id="CHEBI:57945"/>
        <dbReference type="EC" id="7.1.1.2"/>
    </reaction>
</comment>
<comment type="subunit">
    <text evidence="1">Core subunit of respiratory chain NADH dehydrogenase (Complex I) which is composed of 45 different subunits. Interacts with TMEM186. Interacts with TMEM242 (By similarity).</text>
</comment>
<comment type="subcellular location">
    <subcellularLocation>
        <location evidence="2">Mitochondrion inner membrane</location>
        <topology evidence="3">Multi-pass membrane protein</topology>
    </subcellularLocation>
</comment>
<comment type="similarity">
    <text evidence="4">Belongs to the complex I subunit 3 family.</text>
</comment>
<sequence length="115" mass="12847">MNLVIALLINTGLATILVMVAFWLPQLYTYLEKSSPYECGFDPLGSARLPFSMKFFLVAITFLLFDLEIAILLPIPWASQTSSPYSLLSLSGVLLALLTLGLAYEWLQKGLEWTE</sequence>
<geneLocation type="mitochondrion"/>
<gene>
    <name evidence="1" type="primary">MT-ND3</name>
    <name type="synonym">MTND3</name>
    <name type="synonym">NADH3</name>
    <name type="synonym">ND3</name>
</gene>
<feature type="chain" id="PRO_0000117783" description="NADH-ubiquinone oxidoreductase chain 3">
    <location>
        <begin position="1"/>
        <end position="115"/>
    </location>
</feature>
<feature type="transmembrane region" description="Helical" evidence="3">
    <location>
        <begin position="3"/>
        <end position="23"/>
    </location>
</feature>
<feature type="transmembrane region" description="Helical" evidence="3">
    <location>
        <begin position="55"/>
        <end position="75"/>
    </location>
</feature>
<feature type="transmembrane region" description="Helical" evidence="3">
    <location>
        <begin position="87"/>
        <end position="107"/>
    </location>
</feature>
<accession>Q36456</accession>
<keyword id="KW-0249">Electron transport</keyword>
<keyword id="KW-0472">Membrane</keyword>
<keyword id="KW-0496">Mitochondrion</keyword>
<keyword id="KW-0999">Mitochondrion inner membrane</keyword>
<keyword id="KW-0520">NAD</keyword>
<keyword id="KW-1185">Reference proteome</keyword>
<keyword id="KW-0679">Respiratory chain</keyword>
<keyword id="KW-1278">Translocase</keyword>
<keyword id="KW-0812">Transmembrane</keyword>
<keyword id="KW-1133">Transmembrane helix</keyword>
<keyword id="KW-0813">Transport</keyword>
<keyword id="KW-0830">Ubiquinone</keyword>
<reference key="1">
    <citation type="journal article" date="1996" name="J. Mol. Evol.">
        <title>The mitochondrial genome of a monotreme--the platypus (Ornithorhynchus anatinus).</title>
        <authorList>
            <person name="Janke A."/>
            <person name="Gemmell N.J."/>
            <person name="Feldmaier-Fuchs G."/>
            <person name="von Haeseler A."/>
            <person name="Paabo S."/>
        </authorList>
    </citation>
    <scope>NUCLEOTIDE SEQUENCE [LARGE SCALE GENOMIC DNA]</scope>
    <source>
        <strain evidence="5">Glennie</strain>
    </source>
</reference>
<evidence type="ECO:0000250" key="1">
    <source>
        <dbReference type="UniProtKB" id="P03897"/>
    </source>
</evidence>
<evidence type="ECO:0000250" key="2">
    <source>
        <dbReference type="UniProtKB" id="P03898"/>
    </source>
</evidence>
<evidence type="ECO:0000255" key="3"/>
<evidence type="ECO:0000305" key="4"/>
<evidence type="ECO:0000312" key="5">
    <source>
        <dbReference type="Proteomes" id="UP000002279"/>
    </source>
</evidence>
<protein>
    <recommendedName>
        <fullName evidence="1">NADH-ubiquinone oxidoreductase chain 3</fullName>
        <ecNumber evidence="1">7.1.1.2</ecNumber>
    </recommendedName>
    <alternativeName>
        <fullName>NADH dehydrogenase subunit 3</fullName>
    </alternativeName>
</protein>
<name>NU3M_ORNAN</name>
<organism>
    <name type="scientific">Ornithorhynchus anatinus</name>
    <name type="common">Duckbill platypus</name>
    <dbReference type="NCBI Taxonomy" id="9258"/>
    <lineage>
        <taxon>Eukaryota</taxon>
        <taxon>Metazoa</taxon>
        <taxon>Chordata</taxon>
        <taxon>Craniata</taxon>
        <taxon>Vertebrata</taxon>
        <taxon>Euteleostomi</taxon>
        <taxon>Mammalia</taxon>
        <taxon>Monotremata</taxon>
        <taxon>Ornithorhynchidae</taxon>
        <taxon>Ornithorhynchus</taxon>
    </lineage>
</organism>
<dbReference type="EC" id="7.1.1.2" evidence="1"/>
<dbReference type="EMBL" id="X83427">
    <property type="protein sequence ID" value="CAA58462.1"/>
    <property type="molecule type" value="Genomic_DNA"/>
</dbReference>
<dbReference type="PIR" id="H58888">
    <property type="entry name" value="H58888"/>
</dbReference>
<dbReference type="RefSeq" id="NP_008050.1">
    <property type="nucleotide sequence ID" value="NC_000891.1"/>
</dbReference>
<dbReference type="SMR" id="Q36456"/>
<dbReference type="FunCoup" id="Q36456">
    <property type="interactions" value="193"/>
</dbReference>
<dbReference type="STRING" id="9258.ENSOANP00000024990"/>
<dbReference type="Ensembl" id="ENSOANT00000028493.2">
    <property type="protein sequence ID" value="ENSOANP00000024990.2"/>
    <property type="gene ID" value="ENSOANG00000019369.2"/>
</dbReference>
<dbReference type="GeneID" id="808710"/>
<dbReference type="KEGG" id="oaa:808710"/>
<dbReference type="CTD" id="4537"/>
<dbReference type="eggNOG" id="KOG4662">
    <property type="taxonomic scope" value="Eukaryota"/>
</dbReference>
<dbReference type="GeneTree" id="ENSGT00390000011605"/>
<dbReference type="InParanoid" id="Q36456"/>
<dbReference type="OMA" id="GPRRYNR"/>
<dbReference type="OrthoDB" id="154075at2759"/>
<dbReference type="Proteomes" id="UP000002279">
    <property type="component" value="Mitochondrion"/>
</dbReference>
<dbReference type="Bgee" id="ENSOANG00000019369">
    <property type="expression patterns" value="Expressed in adult mammalian kidney and 5 other cell types or tissues"/>
</dbReference>
<dbReference type="GO" id="GO:0005743">
    <property type="term" value="C:mitochondrial inner membrane"/>
    <property type="evidence" value="ECO:0000250"/>
    <property type="project" value="UniProtKB"/>
</dbReference>
<dbReference type="GO" id="GO:0045271">
    <property type="term" value="C:respiratory chain complex I"/>
    <property type="evidence" value="ECO:0000318"/>
    <property type="project" value="GO_Central"/>
</dbReference>
<dbReference type="GO" id="GO:0008137">
    <property type="term" value="F:NADH dehydrogenase (ubiquinone) activity"/>
    <property type="evidence" value="ECO:0000250"/>
    <property type="project" value="UniProtKB"/>
</dbReference>
<dbReference type="GO" id="GO:0006120">
    <property type="term" value="P:mitochondrial electron transport, NADH to ubiquinone"/>
    <property type="evidence" value="ECO:0000250"/>
    <property type="project" value="UniProtKB"/>
</dbReference>
<dbReference type="FunFam" id="1.20.58.1610:FF:000004">
    <property type="entry name" value="NADH-quinone oxidoreductase subunit A"/>
    <property type="match status" value="1"/>
</dbReference>
<dbReference type="Gene3D" id="1.20.58.1610">
    <property type="entry name" value="NADH:ubiquinone/plastoquinone oxidoreductase, chain 3"/>
    <property type="match status" value="1"/>
</dbReference>
<dbReference type="InterPro" id="IPR000440">
    <property type="entry name" value="NADH_UbQ/plastoQ_OxRdtase_su3"/>
</dbReference>
<dbReference type="InterPro" id="IPR038430">
    <property type="entry name" value="NDAH_ubi_oxred_su3_sf"/>
</dbReference>
<dbReference type="PANTHER" id="PTHR11058">
    <property type="entry name" value="NADH-UBIQUINONE OXIDOREDUCTASE CHAIN 3"/>
    <property type="match status" value="1"/>
</dbReference>
<dbReference type="PANTHER" id="PTHR11058:SF9">
    <property type="entry name" value="NADH-UBIQUINONE OXIDOREDUCTASE CHAIN 3"/>
    <property type="match status" value="1"/>
</dbReference>
<dbReference type="Pfam" id="PF00507">
    <property type="entry name" value="Oxidored_q4"/>
    <property type="match status" value="1"/>
</dbReference>